<feature type="chain" id="PRO_0000190349" description="Recombination protein RecR">
    <location>
        <begin position="1"/>
        <end position="203"/>
    </location>
</feature>
<feature type="domain" description="Toprim" evidence="1">
    <location>
        <begin position="79"/>
        <end position="179"/>
    </location>
</feature>
<feature type="zinc finger region" description="C4-type" evidence="1">
    <location>
        <begin position="56"/>
        <end position="71"/>
    </location>
</feature>
<accession>Q744M5</accession>
<gene>
    <name evidence="1" type="primary">recR</name>
    <name type="ordered locus">MAP_0316c</name>
</gene>
<sequence>MFEGPVQDLIDELGKLPGIGPKSAQRIAFHLLSVEPPDIDRLTAVLARVRDGVRFCAVCGNVSDDERCRICSDPRRDASVVCVVEEPKDVQAVERTREFRGRYHVLGGALDPLSGVGPDQLRIRELLSRIGERVDDVDITEVIIATDPNTEGEATATYLVRMLRDIPGLTVTRIASGLPMGGDLEFADELTLGRALAGRRAMV</sequence>
<keyword id="KW-0227">DNA damage</keyword>
<keyword id="KW-0233">DNA recombination</keyword>
<keyword id="KW-0234">DNA repair</keyword>
<keyword id="KW-0479">Metal-binding</keyword>
<keyword id="KW-1185">Reference proteome</keyword>
<keyword id="KW-0862">Zinc</keyword>
<keyword id="KW-0863">Zinc-finger</keyword>
<proteinExistence type="inferred from homology"/>
<protein>
    <recommendedName>
        <fullName evidence="1">Recombination protein RecR</fullName>
    </recommendedName>
</protein>
<name>RECR_MYCPA</name>
<comment type="function">
    <text evidence="1">May play a role in DNA repair. It seems to be involved in an RecBC-independent recombinational process of DNA repair. It may act with RecF and RecO.</text>
</comment>
<comment type="similarity">
    <text evidence="1">Belongs to the RecR family.</text>
</comment>
<organism>
    <name type="scientific">Mycolicibacterium paratuberculosis (strain ATCC BAA-968 / K-10)</name>
    <name type="common">Mycobacterium paratuberculosis</name>
    <dbReference type="NCBI Taxonomy" id="262316"/>
    <lineage>
        <taxon>Bacteria</taxon>
        <taxon>Bacillati</taxon>
        <taxon>Actinomycetota</taxon>
        <taxon>Actinomycetes</taxon>
        <taxon>Mycobacteriales</taxon>
        <taxon>Mycobacteriaceae</taxon>
        <taxon>Mycobacterium</taxon>
        <taxon>Mycobacterium avium complex (MAC)</taxon>
    </lineage>
</organism>
<dbReference type="EMBL" id="AE016958">
    <property type="protein sequence ID" value="AAS02633.1"/>
    <property type="molecule type" value="Genomic_DNA"/>
</dbReference>
<dbReference type="RefSeq" id="WP_003873365.1">
    <property type="nucleotide sequence ID" value="NZ_CP106873.1"/>
</dbReference>
<dbReference type="SMR" id="Q744M5"/>
<dbReference type="STRING" id="262316.MAP_0316c"/>
<dbReference type="GeneID" id="75268280"/>
<dbReference type="KEGG" id="mpa:MAP_0316c"/>
<dbReference type="eggNOG" id="COG0353">
    <property type="taxonomic scope" value="Bacteria"/>
</dbReference>
<dbReference type="HOGENOM" id="CLU_060739_1_0_11"/>
<dbReference type="Proteomes" id="UP000000580">
    <property type="component" value="Chromosome"/>
</dbReference>
<dbReference type="GO" id="GO:0003677">
    <property type="term" value="F:DNA binding"/>
    <property type="evidence" value="ECO:0007669"/>
    <property type="project" value="UniProtKB-UniRule"/>
</dbReference>
<dbReference type="GO" id="GO:0008270">
    <property type="term" value="F:zinc ion binding"/>
    <property type="evidence" value="ECO:0007669"/>
    <property type="project" value="UniProtKB-KW"/>
</dbReference>
<dbReference type="GO" id="GO:0006310">
    <property type="term" value="P:DNA recombination"/>
    <property type="evidence" value="ECO:0007669"/>
    <property type="project" value="UniProtKB-UniRule"/>
</dbReference>
<dbReference type="GO" id="GO:0006281">
    <property type="term" value="P:DNA repair"/>
    <property type="evidence" value="ECO:0007669"/>
    <property type="project" value="UniProtKB-UniRule"/>
</dbReference>
<dbReference type="CDD" id="cd01025">
    <property type="entry name" value="TOPRIM_recR"/>
    <property type="match status" value="1"/>
</dbReference>
<dbReference type="Gene3D" id="3.30.60.80">
    <property type="match status" value="1"/>
</dbReference>
<dbReference type="Gene3D" id="3.40.1360.10">
    <property type="match status" value="1"/>
</dbReference>
<dbReference type="Gene3D" id="6.10.250.240">
    <property type="match status" value="1"/>
</dbReference>
<dbReference type="Gene3D" id="1.10.8.420">
    <property type="entry name" value="RecR Domain 1"/>
    <property type="match status" value="1"/>
</dbReference>
<dbReference type="HAMAP" id="MF_00017">
    <property type="entry name" value="RecR"/>
    <property type="match status" value="1"/>
</dbReference>
<dbReference type="InterPro" id="IPR000093">
    <property type="entry name" value="DNA_Rcmb_RecR"/>
</dbReference>
<dbReference type="InterPro" id="IPR003583">
    <property type="entry name" value="Hlx-hairpin-Hlx_DNA-bd_motif"/>
</dbReference>
<dbReference type="InterPro" id="IPR023627">
    <property type="entry name" value="Rcmb_RecR"/>
</dbReference>
<dbReference type="InterPro" id="IPR015967">
    <property type="entry name" value="Rcmb_RecR_Znf"/>
</dbReference>
<dbReference type="InterPro" id="IPR006171">
    <property type="entry name" value="TOPRIM_dom"/>
</dbReference>
<dbReference type="InterPro" id="IPR034137">
    <property type="entry name" value="TOPRIM_RecR"/>
</dbReference>
<dbReference type="NCBIfam" id="TIGR00615">
    <property type="entry name" value="recR"/>
    <property type="match status" value="1"/>
</dbReference>
<dbReference type="PANTHER" id="PTHR30446">
    <property type="entry name" value="RECOMBINATION PROTEIN RECR"/>
    <property type="match status" value="1"/>
</dbReference>
<dbReference type="PANTHER" id="PTHR30446:SF0">
    <property type="entry name" value="RECOMBINATION PROTEIN RECR"/>
    <property type="match status" value="1"/>
</dbReference>
<dbReference type="Pfam" id="PF21175">
    <property type="entry name" value="RecR_C"/>
    <property type="match status" value="1"/>
</dbReference>
<dbReference type="Pfam" id="PF21176">
    <property type="entry name" value="RecR_HhH"/>
    <property type="match status" value="1"/>
</dbReference>
<dbReference type="Pfam" id="PF02132">
    <property type="entry name" value="RecR_ZnF"/>
    <property type="match status" value="1"/>
</dbReference>
<dbReference type="Pfam" id="PF13662">
    <property type="entry name" value="Toprim_4"/>
    <property type="match status" value="1"/>
</dbReference>
<dbReference type="SMART" id="SM00278">
    <property type="entry name" value="HhH1"/>
    <property type="match status" value="1"/>
</dbReference>
<dbReference type="SMART" id="SM00493">
    <property type="entry name" value="TOPRIM"/>
    <property type="match status" value="1"/>
</dbReference>
<dbReference type="SUPFAM" id="SSF111304">
    <property type="entry name" value="Recombination protein RecR"/>
    <property type="match status" value="1"/>
</dbReference>
<dbReference type="PROSITE" id="PS01300">
    <property type="entry name" value="RECR"/>
    <property type="match status" value="1"/>
</dbReference>
<dbReference type="PROSITE" id="PS50880">
    <property type="entry name" value="TOPRIM"/>
    <property type="match status" value="1"/>
</dbReference>
<evidence type="ECO:0000255" key="1">
    <source>
        <dbReference type="HAMAP-Rule" id="MF_00017"/>
    </source>
</evidence>
<reference key="1">
    <citation type="journal article" date="2005" name="Proc. Natl. Acad. Sci. U.S.A.">
        <title>The complete genome sequence of Mycobacterium avium subspecies paratuberculosis.</title>
        <authorList>
            <person name="Li L."/>
            <person name="Bannantine J.P."/>
            <person name="Zhang Q."/>
            <person name="Amonsin A."/>
            <person name="May B.J."/>
            <person name="Alt D."/>
            <person name="Banerji N."/>
            <person name="Kanjilal S."/>
            <person name="Kapur V."/>
        </authorList>
    </citation>
    <scope>NUCLEOTIDE SEQUENCE [LARGE SCALE GENOMIC DNA]</scope>
    <source>
        <strain>ATCC BAA-968 / K-10</strain>
    </source>
</reference>